<sequence>MKYIYIKTWGCQMNEYDSSMIITLLEKNNQYSLTKSAENADILILNTCSIREKAQEKVFHQLGRWKKIKNNNPKVIIAVGGCVATQEGKEIFKRANYVDIIFGTQTLHRLPKMIDEVEKKRKLSIDISFPKLEKFKYFLAPKKKGYTADISIMEGCNKYCSFCVVPYTRGNEISRPCDDVLFEISLLAKQGIKEINLLGQNVNAYQGPTFNGKVCYFSELIRLVAEIDGIERIRFTTSNPLEFTDDIIEVYKDTPKLVSFLHLPVQSGSNKILNLMKRSYTTEDYTSIIKKLTIARPDIQISSDFIVGFPGESEIDFEKTIEFIKNINFDMSFSFIYSARPGTPASNMNDDLDLKEKKRRLYILQERINIQTMLWSRKMFGSIQSVLVEGVSDKNIMDLYGRTENNRVVTFQGSSKMIGQFVNVKIKKVHTHSLKGELF</sequence>
<accession>P57516</accession>
<dbReference type="EC" id="2.8.4.3" evidence="1"/>
<dbReference type="EMBL" id="BA000003">
    <property type="protein sequence ID" value="BAB13139.1"/>
    <property type="molecule type" value="Genomic_DNA"/>
</dbReference>
<dbReference type="RefSeq" id="NP_240253.1">
    <property type="nucleotide sequence ID" value="NC_002528.1"/>
</dbReference>
<dbReference type="RefSeq" id="WP_010896118.1">
    <property type="nucleotide sequence ID" value="NC_002528.1"/>
</dbReference>
<dbReference type="SMR" id="P57516"/>
<dbReference type="STRING" id="563178.BUAP5A_434"/>
<dbReference type="EnsemblBacteria" id="BAB13139">
    <property type="protein sequence ID" value="BAB13139"/>
    <property type="gene ID" value="BAB13139"/>
</dbReference>
<dbReference type="KEGG" id="buc:BU441"/>
<dbReference type="PATRIC" id="fig|107806.10.peg.450"/>
<dbReference type="eggNOG" id="COG0621">
    <property type="taxonomic scope" value="Bacteria"/>
</dbReference>
<dbReference type="HOGENOM" id="CLU_018697_2_0_6"/>
<dbReference type="Proteomes" id="UP000001806">
    <property type="component" value="Chromosome"/>
</dbReference>
<dbReference type="GO" id="GO:0005829">
    <property type="term" value="C:cytosol"/>
    <property type="evidence" value="ECO:0007669"/>
    <property type="project" value="TreeGrafter"/>
</dbReference>
<dbReference type="GO" id="GO:0051539">
    <property type="term" value="F:4 iron, 4 sulfur cluster binding"/>
    <property type="evidence" value="ECO:0007669"/>
    <property type="project" value="UniProtKB-UniRule"/>
</dbReference>
<dbReference type="GO" id="GO:0046872">
    <property type="term" value="F:metal ion binding"/>
    <property type="evidence" value="ECO:0007669"/>
    <property type="project" value="UniProtKB-KW"/>
</dbReference>
<dbReference type="GO" id="GO:0035597">
    <property type="term" value="F:N6-isopentenyladenosine methylthiotransferase activity"/>
    <property type="evidence" value="ECO:0007669"/>
    <property type="project" value="TreeGrafter"/>
</dbReference>
<dbReference type="CDD" id="cd01335">
    <property type="entry name" value="Radical_SAM"/>
    <property type="match status" value="1"/>
</dbReference>
<dbReference type="FunFam" id="3.40.50.12160:FF:000001">
    <property type="entry name" value="tRNA-2-methylthio-N(6)-dimethylallyladenosine synthase"/>
    <property type="match status" value="1"/>
</dbReference>
<dbReference type="FunFam" id="3.80.30.20:FF:000001">
    <property type="entry name" value="tRNA-2-methylthio-N(6)-dimethylallyladenosine synthase 2"/>
    <property type="match status" value="1"/>
</dbReference>
<dbReference type="Gene3D" id="3.40.50.12160">
    <property type="entry name" value="Methylthiotransferase, N-terminal domain"/>
    <property type="match status" value="1"/>
</dbReference>
<dbReference type="Gene3D" id="3.80.30.20">
    <property type="entry name" value="tm_1862 like domain"/>
    <property type="match status" value="1"/>
</dbReference>
<dbReference type="HAMAP" id="MF_01864">
    <property type="entry name" value="tRNA_metthiotr_MiaB"/>
    <property type="match status" value="1"/>
</dbReference>
<dbReference type="InterPro" id="IPR006638">
    <property type="entry name" value="Elp3/MiaA/NifB-like_rSAM"/>
</dbReference>
<dbReference type="InterPro" id="IPR005839">
    <property type="entry name" value="Methylthiotransferase"/>
</dbReference>
<dbReference type="InterPro" id="IPR020612">
    <property type="entry name" value="Methylthiotransferase_CS"/>
</dbReference>
<dbReference type="InterPro" id="IPR013848">
    <property type="entry name" value="Methylthiotransferase_N"/>
</dbReference>
<dbReference type="InterPro" id="IPR038135">
    <property type="entry name" value="Methylthiotransferase_N_sf"/>
</dbReference>
<dbReference type="InterPro" id="IPR006463">
    <property type="entry name" value="MiaB_methiolase"/>
</dbReference>
<dbReference type="InterPro" id="IPR007197">
    <property type="entry name" value="rSAM"/>
</dbReference>
<dbReference type="InterPro" id="IPR023404">
    <property type="entry name" value="rSAM_horseshoe"/>
</dbReference>
<dbReference type="InterPro" id="IPR002792">
    <property type="entry name" value="TRAM_dom"/>
</dbReference>
<dbReference type="NCBIfam" id="TIGR01574">
    <property type="entry name" value="miaB-methiolase"/>
    <property type="match status" value="1"/>
</dbReference>
<dbReference type="NCBIfam" id="TIGR00089">
    <property type="entry name" value="MiaB/RimO family radical SAM methylthiotransferase"/>
    <property type="match status" value="1"/>
</dbReference>
<dbReference type="PANTHER" id="PTHR43020">
    <property type="entry name" value="CDK5 REGULATORY SUBUNIT-ASSOCIATED PROTEIN 1"/>
    <property type="match status" value="1"/>
</dbReference>
<dbReference type="PANTHER" id="PTHR43020:SF2">
    <property type="entry name" value="MITOCHONDRIAL TRNA METHYLTHIOTRANSFERASE CDK5RAP1"/>
    <property type="match status" value="1"/>
</dbReference>
<dbReference type="Pfam" id="PF04055">
    <property type="entry name" value="Radical_SAM"/>
    <property type="match status" value="1"/>
</dbReference>
<dbReference type="Pfam" id="PF01938">
    <property type="entry name" value="TRAM"/>
    <property type="match status" value="1"/>
</dbReference>
<dbReference type="Pfam" id="PF00919">
    <property type="entry name" value="UPF0004"/>
    <property type="match status" value="1"/>
</dbReference>
<dbReference type="SFLD" id="SFLDF00273">
    <property type="entry name" value="(dimethylallyl)adenosine_tRNA"/>
    <property type="match status" value="1"/>
</dbReference>
<dbReference type="SFLD" id="SFLDG01082">
    <property type="entry name" value="B12-binding_domain_containing"/>
    <property type="match status" value="1"/>
</dbReference>
<dbReference type="SFLD" id="SFLDS00029">
    <property type="entry name" value="Radical_SAM"/>
    <property type="match status" value="1"/>
</dbReference>
<dbReference type="SMART" id="SM00729">
    <property type="entry name" value="Elp3"/>
    <property type="match status" value="1"/>
</dbReference>
<dbReference type="SUPFAM" id="SSF102114">
    <property type="entry name" value="Radical SAM enzymes"/>
    <property type="match status" value="1"/>
</dbReference>
<dbReference type="PROSITE" id="PS51449">
    <property type="entry name" value="MTTASE_N"/>
    <property type="match status" value="1"/>
</dbReference>
<dbReference type="PROSITE" id="PS01278">
    <property type="entry name" value="MTTASE_RADICAL"/>
    <property type="match status" value="1"/>
</dbReference>
<dbReference type="PROSITE" id="PS51918">
    <property type="entry name" value="RADICAL_SAM"/>
    <property type="match status" value="1"/>
</dbReference>
<dbReference type="PROSITE" id="PS50926">
    <property type="entry name" value="TRAM"/>
    <property type="match status" value="1"/>
</dbReference>
<comment type="function">
    <text evidence="1">Catalyzes the methylthiolation of N6-(dimethylallyl)adenosine (i(6)A), leading to the formation of 2-methylthio-N6-(dimethylallyl)adenosine (ms(2)i(6)A) at position 37 in tRNAs that read codons beginning with uridine.</text>
</comment>
<comment type="catalytic activity">
    <reaction evidence="1">
        <text>N(6)-dimethylallyladenosine(37) in tRNA + (sulfur carrier)-SH + AH2 + 2 S-adenosyl-L-methionine = 2-methylsulfanyl-N(6)-dimethylallyladenosine(37) in tRNA + (sulfur carrier)-H + 5'-deoxyadenosine + L-methionine + A + S-adenosyl-L-homocysteine + 2 H(+)</text>
        <dbReference type="Rhea" id="RHEA:37067"/>
        <dbReference type="Rhea" id="RHEA-COMP:10375"/>
        <dbReference type="Rhea" id="RHEA-COMP:10376"/>
        <dbReference type="Rhea" id="RHEA-COMP:14737"/>
        <dbReference type="Rhea" id="RHEA-COMP:14739"/>
        <dbReference type="ChEBI" id="CHEBI:13193"/>
        <dbReference type="ChEBI" id="CHEBI:15378"/>
        <dbReference type="ChEBI" id="CHEBI:17319"/>
        <dbReference type="ChEBI" id="CHEBI:17499"/>
        <dbReference type="ChEBI" id="CHEBI:29917"/>
        <dbReference type="ChEBI" id="CHEBI:57844"/>
        <dbReference type="ChEBI" id="CHEBI:57856"/>
        <dbReference type="ChEBI" id="CHEBI:59789"/>
        <dbReference type="ChEBI" id="CHEBI:64428"/>
        <dbReference type="ChEBI" id="CHEBI:74415"/>
        <dbReference type="ChEBI" id="CHEBI:74417"/>
        <dbReference type="EC" id="2.8.4.3"/>
    </reaction>
</comment>
<comment type="cofactor">
    <cofactor evidence="1">
        <name>[4Fe-4S] cluster</name>
        <dbReference type="ChEBI" id="CHEBI:49883"/>
    </cofactor>
    <text evidence="1">Binds 2 [4Fe-4S] clusters. One cluster is coordinated with 3 cysteines and an exchangeable S-adenosyl-L-methionine.</text>
</comment>
<comment type="subunit">
    <text evidence="1">Monomer.</text>
</comment>
<comment type="subcellular location">
    <subcellularLocation>
        <location evidence="1">Cytoplasm</location>
    </subcellularLocation>
</comment>
<comment type="similarity">
    <text evidence="1">Belongs to the methylthiotransferase family. MiaB subfamily.</text>
</comment>
<gene>
    <name evidence="1" type="primary">miaB</name>
    <name type="ordered locus">BU441</name>
</gene>
<proteinExistence type="inferred from homology"/>
<protein>
    <recommendedName>
        <fullName evidence="1">tRNA-2-methylthio-N(6)-dimethylallyladenosine synthase</fullName>
        <ecNumber evidence="1">2.8.4.3</ecNumber>
    </recommendedName>
    <alternativeName>
        <fullName evidence="1">(Dimethylallyl)adenosine tRNA methylthiotransferase MiaB</fullName>
    </alternativeName>
    <alternativeName>
        <fullName evidence="1">tRNA-i(6)A37 methylthiotransferase</fullName>
    </alternativeName>
</protein>
<keyword id="KW-0004">4Fe-4S</keyword>
<keyword id="KW-0963">Cytoplasm</keyword>
<keyword id="KW-0408">Iron</keyword>
<keyword id="KW-0411">Iron-sulfur</keyword>
<keyword id="KW-0479">Metal-binding</keyword>
<keyword id="KW-1185">Reference proteome</keyword>
<keyword id="KW-0949">S-adenosyl-L-methionine</keyword>
<keyword id="KW-0808">Transferase</keyword>
<keyword id="KW-0819">tRNA processing</keyword>
<evidence type="ECO:0000255" key="1">
    <source>
        <dbReference type="HAMAP-Rule" id="MF_01864"/>
    </source>
</evidence>
<evidence type="ECO:0000255" key="2">
    <source>
        <dbReference type="PROSITE-ProRule" id="PRU01266"/>
    </source>
</evidence>
<organism>
    <name type="scientific">Buchnera aphidicola subsp. Acyrthosiphon pisum (strain APS)</name>
    <name type="common">Acyrthosiphon pisum symbiotic bacterium</name>
    <dbReference type="NCBI Taxonomy" id="107806"/>
    <lineage>
        <taxon>Bacteria</taxon>
        <taxon>Pseudomonadati</taxon>
        <taxon>Pseudomonadota</taxon>
        <taxon>Gammaproteobacteria</taxon>
        <taxon>Enterobacterales</taxon>
        <taxon>Erwiniaceae</taxon>
        <taxon>Buchnera</taxon>
    </lineage>
</organism>
<feature type="chain" id="PRO_0000141730" description="tRNA-2-methylthio-N(6)-dimethylallyladenosine synthase">
    <location>
        <begin position="1"/>
        <end position="439"/>
    </location>
</feature>
<feature type="domain" description="MTTase N-terminal" evidence="1">
    <location>
        <begin position="2"/>
        <end position="119"/>
    </location>
</feature>
<feature type="domain" description="Radical SAM core" evidence="2">
    <location>
        <begin position="142"/>
        <end position="374"/>
    </location>
</feature>
<feature type="domain" description="TRAM" evidence="1">
    <location>
        <begin position="377"/>
        <end position="439"/>
    </location>
</feature>
<feature type="binding site" evidence="1">
    <location>
        <position position="11"/>
    </location>
    <ligand>
        <name>[4Fe-4S] cluster</name>
        <dbReference type="ChEBI" id="CHEBI:49883"/>
        <label>1</label>
    </ligand>
</feature>
<feature type="binding site" evidence="1">
    <location>
        <position position="48"/>
    </location>
    <ligand>
        <name>[4Fe-4S] cluster</name>
        <dbReference type="ChEBI" id="CHEBI:49883"/>
        <label>1</label>
    </ligand>
</feature>
<feature type="binding site" evidence="1">
    <location>
        <position position="82"/>
    </location>
    <ligand>
        <name>[4Fe-4S] cluster</name>
        <dbReference type="ChEBI" id="CHEBI:49883"/>
        <label>1</label>
    </ligand>
</feature>
<feature type="binding site" evidence="1">
    <location>
        <position position="156"/>
    </location>
    <ligand>
        <name>[4Fe-4S] cluster</name>
        <dbReference type="ChEBI" id="CHEBI:49883"/>
        <label>2</label>
        <note>4Fe-4S-S-AdoMet</note>
    </ligand>
</feature>
<feature type="binding site" evidence="1">
    <location>
        <position position="160"/>
    </location>
    <ligand>
        <name>[4Fe-4S] cluster</name>
        <dbReference type="ChEBI" id="CHEBI:49883"/>
        <label>2</label>
        <note>4Fe-4S-S-AdoMet</note>
    </ligand>
</feature>
<feature type="binding site" evidence="1">
    <location>
        <position position="163"/>
    </location>
    <ligand>
        <name>[4Fe-4S] cluster</name>
        <dbReference type="ChEBI" id="CHEBI:49883"/>
        <label>2</label>
        <note>4Fe-4S-S-AdoMet</note>
    </ligand>
</feature>
<reference key="1">
    <citation type="journal article" date="2000" name="Nature">
        <title>Genome sequence of the endocellular bacterial symbiont of aphids Buchnera sp. APS.</title>
        <authorList>
            <person name="Shigenobu S."/>
            <person name="Watanabe H."/>
            <person name="Hattori M."/>
            <person name="Sakaki Y."/>
            <person name="Ishikawa H."/>
        </authorList>
    </citation>
    <scope>NUCLEOTIDE SEQUENCE [LARGE SCALE GENOMIC DNA]</scope>
    <source>
        <strain>APS</strain>
    </source>
</reference>
<name>MIAB_BUCAI</name>